<dbReference type="EC" id="2.8.2.-" evidence="2"/>
<dbReference type="EMBL" id="AF360543">
    <property type="protein sequence ID" value="AAK52908.1"/>
    <property type="molecule type" value="mRNA"/>
</dbReference>
<dbReference type="EMBL" id="AK046415">
    <property type="protein sequence ID" value="BAC32718.1"/>
    <property type="molecule type" value="mRNA"/>
</dbReference>
<dbReference type="EMBL" id="AK047378">
    <property type="protein sequence ID" value="BAC33040.1"/>
    <property type="molecule type" value="mRNA"/>
</dbReference>
<dbReference type="EMBL" id="AK050676">
    <property type="protein sequence ID" value="BAC34375.1"/>
    <property type="status" value="ALT_INIT"/>
    <property type="molecule type" value="mRNA"/>
</dbReference>
<dbReference type="EMBL" id="BC026960">
    <property type="protein sequence ID" value="AAH26960.1"/>
    <property type="molecule type" value="mRNA"/>
</dbReference>
<dbReference type="EMBL" id="BC056956">
    <property type="status" value="NOT_ANNOTATED_CDS"/>
    <property type="molecule type" value="mRNA"/>
</dbReference>
<dbReference type="CCDS" id="CCDS14901.1">
    <molecule id="Q6PGK7-1"/>
</dbReference>
<dbReference type="RefSeq" id="NP_001355709.1">
    <molecule id="Q6PGK7-1"/>
    <property type="nucleotide sequence ID" value="NM_001368780.2"/>
</dbReference>
<dbReference type="RefSeq" id="NP_001418786.1">
    <molecule id="Q6PGK7-1"/>
    <property type="nucleotide sequence ID" value="NM_001431857.1"/>
</dbReference>
<dbReference type="RefSeq" id="NP_001418787.1">
    <molecule id="Q6PGK7-1"/>
    <property type="nucleotide sequence ID" value="NM_001431858.1"/>
</dbReference>
<dbReference type="RefSeq" id="NP_001418788.1">
    <molecule id="Q6PGK7-1"/>
    <property type="nucleotide sequence ID" value="NM_001431859.1"/>
</dbReference>
<dbReference type="RefSeq" id="NP_660124.3">
    <molecule id="Q6PGK7-1"/>
    <property type="nucleotide sequence ID" value="NM_145142.4"/>
</dbReference>
<dbReference type="RefSeq" id="XP_006496428.1">
    <property type="nucleotide sequence ID" value="XM_006496365.3"/>
</dbReference>
<dbReference type="FunCoup" id="Q6PGK7">
    <property type="interactions" value="453"/>
</dbReference>
<dbReference type="STRING" id="10090.ENSMUSP00000027249"/>
<dbReference type="GlyCosmos" id="Q6PGK7">
    <property type="glycosylation" value="3 sites, No reported glycans"/>
</dbReference>
<dbReference type="GlyGen" id="Q6PGK7">
    <property type="glycosylation" value="3 sites, 1 N-linked glycan (1 site)"/>
</dbReference>
<dbReference type="PhosphoSitePlus" id="Q6PGK7"/>
<dbReference type="PaxDb" id="10090-ENSMUSP00000027249"/>
<dbReference type="ProteomicsDB" id="281677">
    <molecule id="Q6PGK7-1"/>
</dbReference>
<dbReference type="ProteomicsDB" id="281678">
    <molecule id="Q6PGK7-2"/>
</dbReference>
<dbReference type="DNASU" id="98388"/>
<dbReference type="Ensembl" id="ENSMUST00000027249.13">
    <molecule id="Q6PGK7-1"/>
    <property type="protein sequence ID" value="ENSMUSP00000027249.8"/>
    <property type="gene ID" value="ENSMUSG00000026080.15"/>
</dbReference>
<dbReference type="Ensembl" id="ENSMUST00000194361.7">
    <molecule id="Q6PGK7-1"/>
    <property type="protein sequence ID" value="ENSMUSP00000141295.3"/>
    <property type="gene ID" value="ENSMUSG00000026080.15"/>
</dbReference>
<dbReference type="GeneID" id="98388"/>
<dbReference type="KEGG" id="mmu:98388"/>
<dbReference type="UCSC" id="uc007ata.1">
    <molecule id="Q6PGK7-2"/>
    <property type="organism name" value="mouse"/>
</dbReference>
<dbReference type="UCSC" id="uc011wjt.1">
    <molecule id="Q6PGK7-1"/>
    <property type="organism name" value="mouse"/>
</dbReference>
<dbReference type="AGR" id="MGI:2138283"/>
<dbReference type="CTD" id="9486"/>
<dbReference type="MGI" id="MGI:2138283">
    <property type="gene designation" value="Chst10"/>
</dbReference>
<dbReference type="eggNOG" id="KOG4651">
    <property type="taxonomic scope" value="Eukaryota"/>
</dbReference>
<dbReference type="GeneTree" id="ENSGT00940000157128"/>
<dbReference type="InParanoid" id="Q6PGK7"/>
<dbReference type="OrthoDB" id="2019940at2759"/>
<dbReference type="Reactome" id="R-MMU-975578">
    <property type="pathway name" value="Reactions specific to the complex N-glycan synthesis pathway"/>
</dbReference>
<dbReference type="UniPathway" id="UPA00353"/>
<dbReference type="BioGRID-ORCS" id="98388">
    <property type="hits" value="0 hits in 76 CRISPR screens"/>
</dbReference>
<dbReference type="ChiTaRS" id="Chst10">
    <property type="organism name" value="mouse"/>
</dbReference>
<dbReference type="PRO" id="PR:Q6PGK7"/>
<dbReference type="Proteomes" id="UP000000589">
    <property type="component" value="Chromosome 1"/>
</dbReference>
<dbReference type="RNAct" id="Q6PGK7">
    <property type="molecule type" value="protein"/>
</dbReference>
<dbReference type="GO" id="GO:0000139">
    <property type="term" value="C:Golgi membrane"/>
    <property type="evidence" value="ECO:0000250"/>
    <property type="project" value="UniProtKB"/>
</dbReference>
<dbReference type="GO" id="GO:0008146">
    <property type="term" value="F:sulfotransferase activity"/>
    <property type="evidence" value="ECO:0000315"/>
    <property type="project" value="MGI"/>
</dbReference>
<dbReference type="GO" id="GO:0008209">
    <property type="term" value="P:androgen metabolic process"/>
    <property type="evidence" value="ECO:0007669"/>
    <property type="project" value="Ensembl"/>
</dbReference>
<dbReference type="GO" id="GO:0016051">
    <property type="term" value="P:carbohydrate biosynthetic process"/>
    <property type="evidence" value="ECO:0007669"/>
    <property type="project" value="InterPro"/>
</dbReference>
<dbReference type="GO" id="GO:0008210">
    <property type="term" value="P:estrogen metabolic process"/>
    <property type="evidence" value="ECO:0007669"/>
    <property type="project" value="Ensembl"/>
</dbReference>
<dbReference type="GO" id="GO:0007612">
    <property type="term" value="P:learning"/>
    <property type="evidence" value="ECO:0000315"/>
    <property type="project" value="MGI"/>
</dbReference>
<dbReference type="GO" id="GO:0007616">
    <property type="term" value="P:long-term memory"/>
    <property type="evidence" value="ECO:0000315"/>
    <property type="project" value="MGI"/>
</dbReference>
<dbReference type="InterPro" id="IPR018011">
    <property type="entry name" value="Carb_sulfotrans_8-10"/>
</dbReference>
<dbReference type="InterPro" id="IPR005331">
    <property type="entry name" value="Sulfotransferase"/>
</dbReference>
<dbReference type="PANTHER" id="PTHR12137">
    <property type="entry name" value="CARBOHYDRATE SULFOTRANSFERASE"/>
    <property type="match status" value="1"/>
</dbReference>
<dbReference type="PANTHER" id="PTHR12137:SF2">
    <property type="entry name" value="CARBOHYDRATE SULFOTRANSFERASE 10"/>
    <property type="match status" value="1"/>
</dbReference>
<dbReference type="Pfam" id="PF03567">
    <property type="entry name" value="Sulfotransfer_2"/>
    <property type="match status" value="1"/>
</dbReference>
<feature type="chain" id="PRO_0000189658" description="Carbohydrate sulfotransferase 10">
    <location>
        <begin position="1"/>
        <end position="356"/>
    </location>
</feature>
<feature type="topological domain" description="Cytoplasmic" evidence="4">
    <location>
        <begin position="1"/>
        <end position="6"/>
    </location>
</feature>
<feature type="transmembrane region" description="Helical; Signal-anchor for type II membrane protein" evidence="4">
    <location>
        <begin position="7"/>
        <end position="27"/>
    </location>
</feature>
<feature type="topological domain" description="Lumenal" evidence="4">
    <location>
        <begin position="28"/>
        <end position="356"/>
    </location>
</feature>
<feature type="binding site" evidence="1">
    <location>
        <begin position="127"/>
        <end position="133"/>
    </location>
    <ligand>
        <name>3'-phosphoadenylyl sulfate</name>
        <dbReference type="ChEBI" id="CHEBI:58339"/>
    </ligand>
</feature>
<feature type="binding site" evidence="1">
    <location>
        <begin position="189"/>
        <end position="197"/>
    </location>
    <ligand>
        <name>3'-phosphoadenylyl sulfate</name>
        <dbReference type="ChEBI" id="CHEBI:58339"/>
    </ligand>
</feature>
<feature type="glycosylation site" description="N-linked (GlcNAc...) asparagine" evidence="4">
    <location>
        <position position="99"/>
    </location>
</feature>
<feature type="glycosylation site" description="N-linked (GlcNAc...) asparagine" evidence="4">
    <location>
        <position position="228"/>
    </location>
</feature>
<feature type="glycosylation site" description="N-linked (GlcNAc...) asparagine" evidence="4">
    <location>
        <position position="316"/>
    </location>
</feature>
<feature type="splice variant" id="VSP_012989" description="In isoform 2." evidence="8">
    <original>MHHQWLLLAACFWVIFMFMVASKFITLTFKDPD</original>
    <variation>MAKTLRDIK</variation>
    <location>
        <begin position="1"/>
        <end position="33"/>
    </location>
</feature>
<feature type="splice variant" id="VSP_012990" description="In isoform 2." evidence="8">
    <original>AFSSIEEIPENVVHDHEKNGLPRLSSFSKIGIQKRLKTYFKFFIV</original>
    <variation>MCGVGGGGTSVMGEGLRLALKDGVASSEKTHNLSEGSLCCFPHSS</variation>
    <location>
        <begin position="144"/>
        <end position="188"/>
    </location>
</feature>
<feature type="splice variant" id="VSP_012991" description="In isoform 2." evidence="8">
    <location>
        <begin position="189"/>
        <end position="356"/>
    </location>
</feature>
<feature type="sequence conflict" description="In Ref. 2; BAC34375." evidence="10" ref="2">
    <original>E</original>
    <variation>A</variation>
    <location>
        <position position="238"/>
    </location>
</feature>
<name>CHSTA_MOUSE</name>
<protein>
    <recommendedName>
        <fullName>Carbohydrate sulfotransferase 10</fullName>
        <ecNumber evidence="2">2.8.2.-</ecNumber>
    </recommendedName>
    <alternativeName>
        <fullName>HNK-1 sulfotransferase</fullName>
        <shortName>HNK-1ST</shortName>
        <shortName>HNK1ST</shortName>
    </alternativeName>
</protein>
<comment type="function">
    <text evidence="2 5 6 7">Catalyzes the transfer of sulfate from 3'-phosphoadenylyl sulfate (PAPS) to position 3 of terminal glucuronic acid of both protein- and lipid-linked oligosaccharides. Participates in biosynthesis of HNK-1 carbohydrate structure 3-O-sulfo-beta-D-GlcA-(1-&gt;3)-beta-D-Gal-(1-&gt;4)-D-GlcNAc-R, a sulfated glucuronyl-lactosaminyl residue carried by many neural recognition molecules, which is involved in cell interactions during ontogenetic development and in synaptic plasticity in the adult. May be indirectly involved in synapse plasticity of the hippocampus, via its role in HNK-1 biosynthesis (PubMed:12213450, PubMed:12358771). Sulfates terminal glucuronyl residue of the laminin globular (LG)-domain binding epitope on DAG1/alpha-dystroglycan and prevents further polymerization by LARGE1 glycosyltransferase. Likely defines the chain length of LG epitope, conferring binding specificity to extracellular matrix components (By similarity). Plays a role in down-regulating the steroid hormones. Sulfates glucuronidated estrogens and androgens with an impact in hormone cycle and fertility. Has a preference for glucuronyl moiety at the 3-hydroxyl group of a sterol ring rather than the 17-hydroxyl group, showing high catalytic efficiency for 17beta-estradiol 3-O-(beta-D-glucuronate) and dehydroepiandrosterone 3-O-(beta-D-glucuronate) hormones (By similarity) (PubMed:23269668).</text>
</comment>
<comment type="catalytic activity">
    <reaction evidence="2">
        <text>3-O-{beta-D-GlcA-(1-&gt;[3)-alpha-D-Xyl-(1-&gt;3)-beta-D-GlcA-(1-&gt;](n)-4)-beta-D-Xyl-(1-&gt;4)-Rib-ol-P-Rib-ol-P-3-beta-D-GalNAc-(1-&gt;3)-beta-D-GlcNAc-(1-&gt;4)-O-6-P-alpha-D-Man}-L-Thr-[protein] + 3'-phosphoadenylyl sulfate = 3-O-{O-3-S-beta-D-GlcA-(1-&gt;[3)-alpha-D-Xyl-(1-&gt;3)-beta-D-GlcA-(1-&gt;](n)-4)-beta-D-Xyl-(1-&gt;4)-Rib-ol-P-Rib-ol-P-3-beta-D-GalNAc-(1-&gt;3)-beta-D-GlcNAc-(1-&gt;4)-O-6-P-alpha-D-Man}-L-Thr-[protein] + adenosine 3',5'-bisphosphate + H(+)</text>
        <dbReference type="Rhea" id="RHEA:68304"/>
        <dbReference type="Rhea" id="RHEA-COMP:17486"/>
        <dbReference type="Rhea" id="RHEA-COMP:17487"/>
        <dbReference type="ChEBI" id="CHEBI:15378"/>
        <dbReference type="ChEBI" id="CHEBI:58339"/>
        <dbReference type="ChEBI" id="CHEBI:58343"/>
        <dbReference type="ChEBI" id="CHEBI:177355"/>
        <dbReference type="ChEBI" id="CHEBI:177363"/>
    </reaction>
    <physiologicalReaction direction="left-to-right" evidence="2">
        <dbReference type="Rhea" id="RHEA:68305"/>
    </physiologicalReaction>
</comment>
<comment type="catalytic activity">
    <reaction evidence="2">
        <text>17beta-estradiol 3-O-(beta-D-glucuronate) + 3'-phosphoadenylyl sulfate = 17beta-estradiol 3-O-(3-sulfo-beta-D-glucuronate) + adenosine 3',5'-bisphosphate + H(+)</text>
        <dbReference type="Rhea" id="RHEA:68696"/>
        <dbReference type="ChEBI" id="CHEBI:15378"/>
        <dbReference type="ChEBI" id="CHEBI:58339"/>
        <dbReference type="ChEBI" id="CHEBI:58343"/>
        <dbReference type="ChEBI" id="CHEBI:136641"/>
        <dbReference type="ChEBI" id="CHEBI:178093"/>
    </reaction>
    <physiologicalReaction direction="left-to-right" evidence="2">
        <dbReference type="Rhea" id="RHEA:68697"/>
    </physiologicalReaction>
</comment>
<comment type="catalytic activity">
    <reaction evidence="2">
        <text>17beta-estradiol 3-O-(beta-D-glucuronate) 17-sulfate + 3'-phosphoadenylyl sulfate = 17beta-estradiol 3-O-(3-sulfo-beta-D-glucuronate) 17-sulfate + adenosine 3',5'-bisphosphate + H(+)</text>
        <dbReference type="Rhea" id="RHEA:68660"/>
        <dbReference type="ChEBI" id="CHEBI:15378"/>
        <dbReference type="ChEBI" id="CHEBI:58339"/>
        <dbReference type="ChEBI" id="CHEBI:58343"/>
        <dbReference type="ChEBI" id="CHEBI:178094"/>
        <dbReference type="ChEBI" id="CHEBI:178095"/>
    </reaction>
    <physiologicalReaction direction="left-to-right" evidence="2">
        <dbReference type="Rhea" id="RHEA:68661"/>
    </physiologicalReaction>
</comment>
<comment type="catalytic activity">
    <reaction evidence="2">
        <text>17beta-estradiol 17-O-(beta-D-glucuronate) + 3'-phosphoadenylyl sulfate = 17beta-estradiol 17-O-(3-sulfo-beta-D-glucuronate) + adenosine 3',5'-bisphosphate + H(+)</text>
        <dbReference type="Rhea" id="RHEA:68664"/>
        <dbReference type="ChEBI" id="CHEBI:15378"/>
        <dbReference type="ChEBI" id="CHEBI:58339"/>
        <dbReference type="ChEBI" id="CHEBI:58343"/>
        <dbReference type="ChEBI" id="CHEBI:82961"/>
        <dbReference type="ChEBI" id="CHEBI:178096"/>
    </reaction>
    <physiologicalReaction direction="left-to-right" evidence="2">
        <dbReference type="Rhea" id="RHEA:68665"/>
    </physiologicalReaction>
</comment>
<comment type="catalytic activity">
    <reaction evidence="2">
        <text>16alpha,17beta-estriol 3-O-(beta-D-glucuronate) + 3'-phosphoadenylyl sulfate = 16alpha,17beta-estriol 3-O-(3-sulfo-beta-D-glucuronate) + adenosine 3',5'-bisphosphate + H(+)</text>
        <dbReference type="Rhea" id="RHEA:68668"/>
        <dbReference type="ChEBI" id="CHEBI:15378"/>
        <dbReference type="ChEBI" id="CHEBI:58339"/>
        <dbReference type="ChEBI" id="CHEBI:58343"/>
        <dbReference type="ChEBI" id="CHEBI:136649"/>
        <dbReference type="ChEBI" id="CHEBI:178097"/>
    </reaction>
    <physiologicalReaction direction="left-to-right" evidence="2">
        <dbReference type="Rhea" id="RHEA:68669"/>
    </physiologicalReaction>
</comment>
<comment type="catalytic activity">
    <reaction evidence="2">
        <text>16alpha,17beta-estriol 16-O-(beta-D-glucuronate) + 3'-phosphoadenylyl sulfate = 16alpha,17beta-estriol 16-O-(3-sulfo-beta-D-glucuronate) + adenosine 3',5'-bisphosphate + H(+)</text>
        <dbReference type="Rhea" id="RHEA:68672"/>
        <dbReference type="ChEBI" id="CHEBI:15378"/>
        <dbReference type="ChEBI" id="CHEBI:58339"/>
        <dbReference type="ChEBI" id="CHEBI:58343"/>
        <dbReference type="ChEBI" id="CHEBI:136650"/>
        <dbReference type="ChEBI" id="CHEBI:178098"/>
    </reaction>
    <physiologicalReaction direction="left-to-right" evidence="2">
        <dbReference type="Rhea" id="RHEA:68673"/>
    </physiologicalReaction>
</comment>
<comment type="catalytic activity">
    <reaction evidence="2">
        <text>16alpha,17beta-estriol 17-O-(beta-D-glucuronate) + 3'-phosphoadenylyl sulfate = 16alpha,17beta-estriol 17-O-(3-sulfo-beta-D-glucuronate) + adenosine 3',5'-bisphosphate + H(+)</text>
        <dbReference type="Rhea" id="RHEA:68700"/>
        <dbReference type="ChEBI" id="CHEBI:15378"/>
        <dbReference type="ChEBI" id="CHEBI:58339"/>
        <dbReference type="ChEBI" id="CHEBI:58343"/>
        <dbReference type="ChEBI" id="CHEBI:178099"/>
        <dbReference type="ChEBI" id="CHEBI:178100"/>
    </reaction>
    <physiologicalReaction direction="left-to-right" evidence="2">
        <dbReference type="Rhea" id="RHEA:68701"/>
    </physiologicalReaction>
</comment>
<comment type="catalytic activity">
    <reaction evidence="2">
        <text>estrone 3-O-(beta-D-glucuronate) + 3'-phosphoadenylyl sulfate = estrone 3-O-(3-sulfo-beta-D-glucuronate) + adenosine 3',5'-bisphosphate + H(+)</text>
        <dbReference type="Rhea" id="RHEA:68676"/>
        <dbReference type="ChEBI" id="CHEBI:15378"/>
        <dbReference type="ChEBI" id="CHEBI:58339"/>
        <dbReference type="ChEBI" id="CHEBI:58343"/>
        <dbReference type="ChEBI" id="CHEBI:136634"/>
        <dbReference type="ChEBI" id="CHEBI:178101"/>
    </reaction>
    <physiologicalReaction direction="left-to-right" evidence="2">
        <dbReference type="Rhea" id="RHEA:68677"/>
    </physiologicalReaction>
</comment>
<comment type="catalytic activity">
    <reaction evidence="2">
        <text>3alpha,20alpha-dihydroxy-5beta-pregnane 3-O-(beta-D-glucuronate) + 3'-phosphoadenylyl sulfate = 3alpha,20alpha-dihydroxy-5beta-pregnane 3-O-(3-sulfo-beta-D-glucuronate) + adenosine 3',5'-bisphosphate + H(+)</text>
        <dbReference type="Rhea" id="RHEA:68680"/>
        <dbReference type="ChEBI" id="CHEBI:15378"/>
        <dbReference type="ChEBI" id="CHEBI:58339"/>
        <dbReference type="ChEBI" id="CHEBI:58343"/>
        <dbReference type="ChEBI" id="CHEBI:178102"/>
        <dbReference type="ChEBI" id="CHEBI:178103"/>
    </reaction>
    <physiologicalReaction direction="left-to-right" evidence="2">
        <dbReference type="Rhea" id="RHEA:68681"/>
    </physiologicalReaction>
</comment>
<comment type="catalytic activity">
    <reaction evidence="2">
        <text>testosterone 17-O-(beta-D-glucuronate) + 3'-phosphoadenylyl sulfate = testosterone 17-O-(3-sulfo-beta-D-glucuronate) + adenosine 3',5'-bisphosphate + H(+)</text>
        <dbReference type="Rhea" id="RHEA:68684"/>
        <dbReference type="ChEBI" id="CHEBI:15378"/>
        <dbReference type="ChEBI" id="CHEBI:58339"/>
        <dbReference type="ChEBI" id="CHEBI:58343"/>
        <dbReference type="ChEBI" id="CHEBI:136639"/>
        <dbReference type="ChEBI" id="CHEBI:178104"/>
    </reaction>
    <physiologicalReaction direction="left-to-right" evidence="2">
        <dbReference type="Rhea" id="RHEA:68685"/>
    </physiologicalReaction>
</comment>
<comment type="catalytic activity">
    <reaction evidence="2">
        <text>3beta-androst-5-en-17-one 3-O-(beta-D-glucuronate) + 3'-phosphoadenylyl sulfate = 3beta-androst-5-en-17-one 3-O-(3-sulfo-beta-D-glucuronate) + adenosine 3',5'-bisphosphate + H(+)</text>
        <dbReference type="Rhea" id="RHEA:68688"/>
        <dbReference type="ChEBI" id="CHEBI:15378"/>
        <dbReference type="ChEBI" id="CHEBI:58339"/>
        <dbReference type="ChEBI" id="CHEBI:58343"/>
        <dbReference type="ChEBI" id="CHEBI:178105"/>
        <dbReference type="ChEBI" id="CHEBI:178106"/>
    </reaction>
    <physiologicalReaction direction="left-to-right" evidence="2">
        <dbReference type="Rhea" id="RHEA:68689"/>
    </physiologicalReaction>
</comment>
<comment type="catalytic activity">
    <reaction evidence="2">
        <text>3alpha,17alpha-dihydroxy-5beta-androstane-11-one-17beta-carboxylate 3-O-(beta-D-glucuronate) + 3'-phosphoadenylyl sulfate = 3alpha,17alpha-dihydroxy-5beta-androstane-11-one-17beta-carboxylate 3-O-(3-sulfo-beta-D-glucuronate) + adenosine 3',5'-bisphosphate + H(+)</text>
        <dbReference type="Rhea" id="RHEA:68692"/>
        <dbReference type="ChEBI" id="CHEBI:15378"/>
        <dbReference type="ChEBI" id="CHEBI:58339"/>
        <dbReference type="ChEBI" id="CHEBI:58343"/>
        <dbReference type="ChEBI" id="CHEBI:178107"/>
        <dbReference type="ChEBI" id="CHEBI:178108"/>
    </reaction>
    <physiologicalReaction direction="left-to-right" evidence="2">
        <dbReference type="Rhea" id="RHEA:68693"/>
    </physiologicalReaction>
</comment>
<comment type="catalytic activity">
    <reaction evidence="2">
        <text>3alpha-hydroxyetiocholan-17-one 3-O-(beta-D-glucuronate) + 3'-phosphoadenylyl sulfate = 3alpha-hydroxyetiocholan-17-one 3-O-(3-sulfo-beta-D-glucuronate) + adenosine 3',5'-bisphosphate + H(+)</text>
        <dbReference type="Rhea" id="RHEA:68704"/>
        <dbReference type="ChEBI" id="CHEBI:15378"/>
        <dbReference type="ChEBI" id="CHEBI:58339"/>
        <dbReference type="ChEBI" id="CHEBI:58343"/>
        <dbReference type="ChEBI" id="CHEBI:178197"/>
        <dbReference type="ChEBI" id="CHEBI:178198"/>
    </reaction>
    <physiologicalReaction direction="left-to-right" evidence="2">
        <dbReference type="Rhea" id="RHEA:68705"/>
    </physiologicalReaction>
</comment>
<comment type="pathway">
    <text evidence="2">Steroid metabolism.</text>
</comment>
<comment type="pathway">
    <text evidence="2">Protein modification; carbohydrate sulfation.</text>
</comment>
<comment type="subcellular location">
    <subcellularLocation>
        <location evidence="3">Golgi apparatus membrane</location>
        <topology evidence="4">Single-pass type II membrane protein</topology>
    </subcellularLocation>
</comment>
<comment type="alternative products">
    <event type="alternative splicing"/>
    <isoform>
        <id>Q6PGK7-1</id>
        <name>1</name>
        <sequence type="displayed"/>
    </isoform>
    <isoform>
        <id>Q6PGK7-2</id>
        <name>2</name>
        <sequence type="described" ref="VSP_012989 VSP_012990 VSP_012991"/>
    </isoform>
</comment>
<comment type="disruption phenotype">
    <text evidence="5 6 7">Mice are viable, fertile and show normal cerebellar granule neuron migration. The anatomy of all major brain areas are histologically normal. However, basal synaptic transmission in pyramidal cells in the CA1 region of the hippocampus are increased and long-term potentiation evoked by theta-burst stimulation are reduced. Mice show an impaired long-term memory and a poorer spatial learning when a short inter-trial interval is used (PubMed:12213450, PubMed:12358771). Mutant female mice are subfertile, have extensive growth of endometrial epithelium associated with increased 17-beta-estradiol levels at pro-estrus phase and dysregulated hormonal cycle (PubMed:23269668).</text>
</comment>
<comment type="similarity">
    <text evidence="10">Belongs to the sulfotransferase 2 family.</text>
</comment>
<comment type="sequence caution" evidence="10">
    <conflict type="erroneous initiation">
        <sequence resource="EMBL-CDS" id="BAC34375"/>
    </conflict>
</comment>
<comment type="sequence caution" evidence="10">
    <conflict type="miscellaneous discrepancy">
        <sequence resource="EMBL" id="BC056956"/>
    </conflict>
    <text>Intron retention.</text>
</comment>
<gene>
    <name evidence="9 11" type="primary">Chst10</name>
</gene>
<keyword id="KW-0025">Alternative splicing</keyword>
<keyword id="KW-0119">Carbohydrate metabolism</keyword>
<keyword id="KW-0325">Glycoprotein</keyword>
<keyword id="KW-0333">Golgi apparatus</keyword>
<keyword id="KW-0443">Lipid metabolism</keyword>
<keyword id="KW-0472">Membrane</keyword>
<keyword id="KW-1185">Reference proteome</keyword>
<keyword id="KW-0735">Signal-anchor</keyword>
<keyword id="KW-0753">Steroid metabolism</keyword>
<keyword id="KW-0808">Transferase</keyword>
<keyword id="KW-0812">Transmembrane</keyword>
<keyword id="KW-1133">Transmembrane helix</keyword>
<sequence length="356" mass="42055">MHHQWLLLAACFWVIFMFMVASKFITLTFKDPDGYSAKQEFVFLTTMPEAEKLRGEKHFPEVPKPTGKMLSDSRPDQPPVYLERLELIRNTCKEEALRNLSHTEVSKFVLDRIFVCDKHKILFCQTPKVGNTQWKKVLIVLNGAFSSIEEIPENVVHDHEKNGLPRLSSFSKIGIQKRLKTYFKFFIVRDPFERLISAFKDKFVHNPRFEPWYRHEIAPGIIRKYRKNRTETRGIQFEDFVRYLGDPNRRWLDLQFGDHIIHWVTYVELCAPCEIKYSVVGHHETLEADAPYILKEAGIDHLVSYPTIPPGITMYNRTKVEQYFLGISKRDIRRLYARFEGDFKLFGYQKPDFLLN</sequence>
<reference key="1">
    <citation type="submission" date="2001-03" db="EMBL/GenBank/DDBJ databases">
        <title>Complete sequence of murine HNK-1 sulfotransferase.</title>
        <authorList>
            <person name="Spanjaard R.A."/>
            <person name="Zhao X."/>
        </authorList>
    </citation>
    <scope>NUCLEOTIDE SEQUENCE [MRNA] (ISOFORM 1)</scope>
    <source>
        <tissue>Melanoma</tissue>
    </source>
</reference>
<reference key="2">
    <citation type="journal article" date="2005" name="Science">
        <title>The transcriptional landscape of the mammalian genome.</title>
        <authorList>
            <person name="Carninci P."/>
            <person name="Kasukawa T."/>
            <person name="Katayama S."/>
            <person name="Gough J."/>
            <person name="Frith M.C."/>
            <person name="Maeda N."/>
            <person name="Oyama R."/>
            <person name="Ravasi T."/>
            <person name="Lenhard B."/>
            <person name="Wells C."/>
            <person name="Kodzius R."/>
            <person name="Shimokawa K."/>
            <person name="Bajic V.B."/>
            <person name="Brenner S.E."/>
            <person name="Batalov S."/>
            <person name="Forrest A.R."/>
            <person name="Zavolan M."/>
            <person name="Davis M.J."/>
            <person name="Wilming L.G."/>
            <person name="Aidinis V."/>
            <person name="Allen J.E."/>
            <person name="Ambesi-Impiombato A."/>
            <person name="Apweiler R."/>
            <person name="Aturaliya R.N."/>
            <person name="Bailey T.L."/>
            <person name="Bansal M."/>
            <person name="Baxter L."/>
            <person name="Beisel K.W."/>
            <person name="Bersano T."/>
            <person name="Bono H."/>
            <person name="Chalk A.M."/>
            <person name="Chiu K.P."/>
            <person name="Choudhary V."/>
            <person name="Christoffels A."/>
            <person name="Clutterbuck D.R."/>
            <person name="Crowe M.L."/>
            <person name="Dalla E."/>
            <person name="Dalrymple B.P."/>
            <person name="de Bono B."/>
            <person name="Della Gatta G."/>
            <person name="di Bernardo D."/>
            <person name="Down T."/>
            <person name="Engstrom P."/>
            <person name="Fagiolini M."/>
            <person name="Faulkner G."/>
            <person name="Fletcher C.F."/>
            <person name="Fukushima T."/>
            <person name="Furuno M."/>
            <person name="Futaki S."/>
            <person name="Gariboldi M."/>
            <person name="Georgii-Hemming P."/>
            <person name="Gingeras T.R."/>
            <person name="Gojobori T."/>
            <person name="Green R.E."/>
            <person name="Gustincich S."/>
            <person name="Harbers M."/>
            <person name="Hayashi Y."/>
            <person name="Hensch T.K."/>
            <person name="Hirokawa N."/>
            <person name="Hill D."/>
            <person name="Huminiecki L."/>
            <person name="Iacono M."/>
            <person name="Ikeo K."/>
            <person name="Iwama A."/>
            <person name="Ishikawa T."/>
            <person name="Jakt M."/>
            <person name="Kanapin A."/>
            <person name="Katoh M."/>
            <person name="Kawasawa Y."/>
            <person name="Kelso J."/>
            <person name="Kitamura H."/>
            <person name="Kitano H."/>
            <person name="Kollias G."/>
            <person name="Krishnan S.P."/>
            <person name="Kruger A."/>
            <person name="Kummerfeld S.K."/>
            <person name="Kurochkin I.V."/>
            <person name="Lareau L.F."/>
            <person name="Lazarevic D."/>
            <person name="Lipovich L."/>
            <person name="Liu J."/>
            <person name="Liuni S."/>
            <person name="McWilliam S."/>
            <person name="Madan Babu M."/>
            <person name="Madera M."/>
            <person name="Marchionni L."/>
            <person name="Matsuda H."/>
            <person name="Matsuzawa S."/>
            <person name="Miki H."/>
            <person name="Mignone F."/>
            <person name="Miyake S."/>
            <person name="Morris K."/>
            <person name="Mottagui-Tabar S."/>
            <person name="Mulder N."/>
            <person name="Nakano N."/>
            <person name="Nakauchi H."/>
            <person name="Ng P."/>
            <person name="Nilsson R."/>
            <person name="Nishiguchi S."/>
            <person name="Nishikawa S."/>
            <person name="Nori F."/>
            <person name="Ohara O."/>
            <person name="Okazaki Y."/>
            <person name="Orlando V."/>
            <person name="Pang K.C."/>
            <person name="Pavan W.J."/>
            <person name="Pavesi G."/>
            <person name="Pesole G."/>
            <person name="Petrovsky N."/>
            <person name="Piazza S."/>
            <person name="Reed J."/>
            <person name="Reid J.F."/>
            <person name="Ring B.Z."/>
            <person name="Ringwald M."/>
            <person name="Rost B."/>
            <person name="Ruan Y."/>
            <person name="Salzberg S.L."/>
            <person name="Sandelin A."/>
            <person name="Schneider C."/>
            <person name="Schoenbach C."/>
            <person name="Sekiguchi K."/>
            <person name="Semple C.A."/>
            <person name="Seno S."/>
            <person name="Sessa L."/>
            <person name="Sheng Y."/>
            <person name="Shibata Y."/>
            <person name="Shimada H."/>
            <person name="Shimada K."/>
            <person name="Silva D."/>
            <person name="Sinclair B."/>
            <person name="Sperling S."/>
            <person name="Stupka E."/>
            <person name="Sugiura K."/>
            <person name="Sultana R."/>
            <person name="Takenaka Y."/>
            <person name="Taki K."/>
            <person name="Tammoja K."/>
            <person name="Tan S.L."/>
            <person name="Tang S."/>
            <person name="Taylor M.S."/>
            <person name="Tegner J."/>
            <person name="Teichmann S.A."/>
            <person name="Ueda H.R."/>
            <person name="van Nimwegen E."/>
            <person name="Verardo R."/>
            <person name="Wei C.L."/>
            <person name="Yagi K."/>
            <person name="Yamanishi H."/>
            <person name="Zabarovsky E."/>
            <person name="Zhu S."/>
            <person name="Zimmer A."/>
            <person name="Hide W."/>
            <person name="Bult C."/>
            <person name="Grimmond S.M."/>
            <person name="Teasdale R.D."/>
            <person name="Liu E.T."/>
            <person name="Brusic V."/>
            <person name="Quackenbush J."/>
            <person name="Wahlestedt C."/>
            <person name="Mattick J.S."/>
            <person name="Hume D.A."/>
            <person name="Kai C."/>
            <person name="Sasaki D."/>
            <person name="Tomaru Y."/>
            <person name="Fukuda S."/>
            <person name="Kanamori-Katayama M."/>
            <person name="Suzuki M."/>
            <person name="Aoki J."/>
            <person name="Arakawa T."/>
            <person name="Iida J."/>
            <person name="Imamura K."/>
            <person name="Itoh M."/>
            <person name="Kato T."/>
            <person name="Kawaji H."/>
            <person name="Kawagashira N."/>
            <person name="Kawashima T."/>
            <person name="Kojima M."/>
            <person name="Kondo S."/>
            <person name="Konno H."/>
            <person name="Nakano K."/>
            <person name="Ninomiya N."/>
            <person name="Nishio T."/>
            <person name="Okada M."/>
            <person name="Plessy C."/>
            <person name="Shibata K."/>
            <person name="Shiraki T."/>
            <person name="Suzuki S."/>
            <person name="Tagami M."/>
            <person name="Waki K."/>
            <person name="Watahiki A."/>
            <person name="Okamura-Oho Y."/>
            <person name="Suzuki H."/>
            <person name="Kawai J."/>
            <person name="Hayashizaki Y."/>
        </authorList>
    </citation>
    <scope>NUCLEOTIDE SEQUENCE [LARGE SCALE MRNA] (ISOFORMS 1 AND 2)</scope>
    <source>
        <strain>C57BL/6J</strain>
        <tissue>Cerebellum</tissue>
        <tissue>Corpora quadrigemina</tissue>
    </source>
</reference>
<reference key="3">
    <citation type="journal article" date="2004" name="Genome Res.">
        <title>The status, quality, and expansion of the NIH full-length cDNA project: the Mammalian Gene Collection (MGC).</title>
        <authorList>
            <consortium name="The MGC Project Team"/>
        </authorList>
    </citation>
    <scope>NUCLEOTIDE SEQUENCE [LARGE SCALE MRNA] (ISOFORM 1)</scope>
    <source>
        <strain>C57BL/6J</strain>
        <strain>Czech II</strain>
        <tissue>Brain</tissue>
        <tissue>Mammary tumor</tissue>
    </source>
</reference>
<reference key="4">
    <citation type="journal article" date="2002" name="J. Neurochem.">
        <title>HNK-1 sulfotransferase null mice express glucuronyl glycoconjugates and show normal cerebellar granule neuron migration in vivo and in vitro.</title>
        <authorList>
            <person name="Chou D.K.H."/>
            <person name="Schachner M."/>
            <person name="Jungalwala F.B."/>
        </authorList>
    </citation>
    <scope>DISRUPTION PHENOTYPE</scope>
    <scope>FUNCTION</scope>
</reference>
<reference key="5">
    <citation type="journal article" date="2002" name="Mol. Cell. Neurosci.">
        <title>Mice deficient for the HNK-1 sulfotransferase show alterations in synaptic efficacy and spatial learning and memory.</title>
        <authorList>
            <person name="Senn C."/>
            <person name="Kutsche M."/>
            <person name="Saghatelyan A."/>
            <person name="Boesl M.R."/>
            <person name="Loehler J."/>
            <person name="Bartsch U."/>
            <person name="Morellini F."/>
            <person name="Schachner M."/>
        </authorList>
    </citation>
    <scope>DISRUPTION PHENOTYPE</scope>
    <scope>FUNCTION</scope>
</reference>
<reference key="6">
    <citation type="journal article" date="2013" name="J. Biol. Chem.">
        <title>In vivo regulation of steroid hormones by the Chst10 sulfotransferase in mouse.</title>
        <authorList>
            <person name="Suzuki-Anekoji M."/>
            <person name="Suzuki A."/>
            <person name="Wu S.W."/>
            <person name="Angata K."/>
            <person name="Murai K.K."/>
            <person name="Sugihara K."/>
            <person name="Akama T.O."/>
            <person name="Khoo K.H."/>
            <person name="Nakayama J."/>
            <person name="Fukuda M.N."/>
            <person name="Fukuda M."/>
        </authorList>
    </citation>
    <scope>FUNCTION</scope>
    <scope>DISRUPTION PHENOTYPE</scope>
</reference>
<organism>
    <name type="scientific">Mus musculus</name>
    <name type="common">Mouse</name>
    <dbReference type="NCBI Taxonomy" id="10090"/>
    <lineage>
        <taxon>Eukaryota</taxon>
        <taxon>Metazoa</taxon>
        <taxon>Chordata</taxon>
        <taxon>Craniata</taxon>
        <taxon>Vertebrata</taxon>
        <taxon>Euteleostomi</taxon>
        <taxon>Mammalia</taxon>
        <taxon>Eutheria</taxon>
        <taxon>Euarchontoglires</taxon>
        <taxon>Glires</taxon>
        <taxon>Rodentia</taxon>
        <taxon>Myomorpha</taxon>
        <taxon>Muroidea</taxon>
        <taxon>Muridae</taxon>
        <taxon>Murinae</taxon>
        <taxon>Mus</taxon>
        <taxon>Mus</taxon>
    </lineage>
</organism>
<evidence type="ECO:0000250" key="1"/>
<evidence type="ECO:0000250" key="2">
    <source>
        <dbReference type="UniProtKB" id="O43529"/>
    </source>
</evidence>
<evidence type="ECO:0000250" key="3">
    <source>
        <dbReference type="UniProtKB" id="O54702"/>
    </source>
</evidence>
<evidence type="ECO:0000255" key="4"/>
<evidence type="ECO:0000269" key="5">
    <source>
    </source>
</evidence>
<evidence type="ECO:0000269" key="6">
    <source>
    </source>
</evidence>
<evidence type="ECO:0000269" key="7">
    <source>
    </source>
</evidence>
<evidence type="ECO:0000303" key="8">
    <source>
    </source>
</evidence>
<evidence type="ECO:0000303" key="9">
    <source>
    </source>
</evidence>
<evidence type="ECO:0000305" key="10"/>
<evidence type="ECO:0000312" key="11">
    <source>
        <dbReference type="MGI" id="MGI:2138283"/>
    </source>
</evidence>
<accession>Q6PGK7</accession>
<accession>Q8BKU3</accession>
<accession>Q8BL08</accession>
<accession>Q8R2Y5</accession>
<accession>Q91Y40</accession>
<proteinExistence type="evidence at transcript level"/>